<accession>Q0HLE7</accession>
<evidence type="ECO:0000250" key="1">
    <source>
        <dbReference type="UniProtKB" id="P50389"/>
    </source>
</evidence>
<evidence type="ECO:0000255" key="2">
    <source>
        <dbReference type="HAMAP-Rule" id="MF_01627"/>
    </source>
</evidence>
<proteinExistence type="inferred from homology"/>
<feature type="chain" id="PRO_1000069646" description="Purine nucleoside phosphorylase DeoD-type">
    <location>
        <begin position="1"/>
        <end position="236"/>
    </location>
</feature>
<feature type="active site" description="Proton donor" evidence="2">
    <location>
        <position position="205"/>
    </location>
</feature>
<feature type="binding site" evidence="1">
    <location>
        <position position="5"/>
    </location>
    <ligand>
        <name>a purine D-ribonucleoside</name>
        <dbReference type="ChEBI" id="CHEBI:142355"/>
        <note>ligand shared between dimeric partners</note>
    </ligand>
</feature>
<feature type="binding site" description="in other chain" evidence="1">
    <location>
        <position position="21"/>
    </location>
    <ligand>
        <name>phosphate</name>
        <dbReference type="ChEBI" id="CHEBI:43474"/>
        <note>ligand shared between dimeric partners</note>
    </ligand>
</feature>
<feature type="binding site" description="in other chain" evidence="1">
    <location>
        <position position="25"/>
    </location>
    <ligand>
        <name>phosphate</name>
        <dbReference type="ChEBI" id="CHEBI:43474"/>
        <note>ligand shared between dimeric partners</note>
    </ligand>
</feature>
<feature type="binding site" evidence="1">
    <location>
        <position position="44"/>
    </location>
    <ligand>
        <name>phosphate</name>
        <dbReference type="ChEBI" id="CHEBI:43474"/>
        <note>ligand shared between dimeric partners</note>
    </ligand>
</feature>
<feature type="binding site" description="in other chain" evidence="1">
    <location>
        <begin position="88"/>
        <end position="91"/>
    </location>
    <ligand>
        <name>phosphate</name>
        <dbReference type="ChEBI" id="CHEBI:43474"/>
        <note>ligand shared between dimeric partners</note>
    </ligand>
</feature>
<feature type="binding site" description="in other chain" evidence="1">
    <location>
        <begin position="180"/>
        <end position="182"/>
    </location>
    <ligand>
        <name>a purine D-ribonucleoside</name>
        <dbReference type="ChEBI" id="CHEBI:142355"/>
        <note>ligand shared between dimeric partners</note>
    </ligand>
</feature>
<feature type="binding site" description="in other chain" evidence="1">
    <location>
        <begin position="204"/>
        <end position="205"/>
    </location>
    <ligand>
        <name>a purine D-ribonucleoside</name>
        <dbReference type="ChEBI" id="CHEBI:142355"/>
        <note>ligand shared between dimeric partners</note>
    </ligand>
</feature>
<feature type="site" description="Important for catalytic activity" evidence="2">
    <location>
        <position position="218"/>
    </location>
</feature>
<keyword id="KW-0328">Glycosyltransferase</keyword>
<keyword id="KW-0808">Transferase</keyword>
<reference key="1">
    <citation type="submission" date="2006-08" db="EMBL/GenBank/DDBJ databases">
        <title>Complete sequence of Shewanella sp. MR-4.</title>
        <authorList>
            <consortium name="US DOE Joint Genome Institute"/>
            <person name="Copeland A."/>
            <person name="Lucas S."/>
            <person name="Lapidus A."/>
            <person name="Barry K."/>
            <person name="Detter J.C."/>
            <person name="Glavina del Rio T."/>
            <person name="Hammon N."/>
            <person name="Israni S."/>
            <person name="Dalin E."/>
            <person name="Tice H."/>
            <person name="Pitluck S."/>
            <person name="Kiss H."/>
            <person name="Brettin T."/>
            <person name="Bruce D."/>
            <person name="Han C."/>
            <person name="Tapia R."/>
            <person name="Gilna P."/>
            <person name="Schmutz J."/>
            <person name="Larimer F."/>
            <person name="Land M."/>
            <person name="Hauser L."/>
            <person name="Kyrpides N."/>
            <person name="Mikhailova N."/>
            <person name="Nealson K."/>
            <person name="Konstantinidis K."/>
            <person name="Klappenbach J."/>
            <person name="Tiedje J."/>
            <person name="Richardson P."/>
        </authorList>
    </citation>
    <scope>NUCLEOTIDE SEQUENCE [LARGE SCALE GENOMIC DNA]</scope>
    <source>
        <strain>MR-4</strain>
    </source>
</reference>
<organism>
    <name type="scientific">Shewanella sp. (strain MR-4)</name>
    <dbReference type="NCBI Taxonomy" id="60480"/>
    <lineage>
        <taxon>Bacteria</taxon>
        <taxon>Pseudomonadati</taxon>
        <taxon>Pseudomonadota</taxon>
        <taxon>Gammaproteobacteria</taxon>
        <taxon>Alteromonadales</taxon>
        <taxon>Shewanellaceae</taxon>
        <taxon>Shewanella</taxon>
    </lineage>
</organism>
<sequence length="236" mass="25589">MATPHINAVEGAFAETVLFPGDPLRAKYIAETFLENVEQVTDVRNMLGFTGTYKGKRISVMGSGMGIPSCSIYATELIKDYGVKNLIRVGTCGAISTDVKVRDVIIGMGACTDSQVNRLRFKGQDFAAIANYELMNAVIESAKVKGTKIRVGNVFSADLFYTPDPQMFDVMEKMGVLGVEMEAAGLYGVAHEFGARALCVVTVSDHIRTGEKTTSDERQTTFNDMIVMTLDAAITL</sequence>
<protein>
    <recommendedName>
        <fullName evidence="2">Purine nucleoside phosphorylase DeoD-type</fullName>
        <shortName evidence="2">PNP</shortName>
        <ecNumber evidence="2">2.4.2.1</ecNumber>
    </recommendedName>
</protein>
<name>DEOD_SHESM</name>
<dbReference type="EC" id="2.4.2.1" evidence="2"/>
<dbReference type="EMBL" id="CP000446">
    <property type="protein sequence ID" value="ABI38120.1"/>
    <property type="molecule type" value="Genomic_DNA"/>
</dbReference>
<dbReference type="RefSeq" id="WP_011621831.1">
    <property type="nucleotide sequence ID" value="NC_008321.1"/>
</dbReference>
<dbReference type="SMR" id="Q0HLE7"/>
<dbReference type="GeneID" id="94727036"/>
<dbReference type="KEGG" id="she:Shewmr4_1040"/>
<dbReference type="HOGENOM" id="CLU_068457_2_0_6"/>
<dbReference type="GO" id="GO:0005829">
    <property type="term" value="C:cytosol"/>
    <property type="evidence" value="ECO:0007669"/>
    <property type="project" value="TreeGrafter"/>
</dbReference>
<dbReference type="GO" id="GO:0004731">
    <property type="term" value="F:purine-nucleoside phosphorylase activity"/>
    <property type="evidence" value="ECO:0007669"/>
    <property type="project" value="UniProtKB-UniRule"/>
</dbReference>
<dbReference type="GO" id="GO:0006152">
    <property type="term" value="P:purine nucleoside catabolic process"/>
    <property type="evidence" value="ECO:0007669"/>
    <property type="project" value="TreeGrafter"/>
</dbReference>
<dbReference type="CDD" id="cd09006">
    <property type="entry name" value="PNP_EcPNPI-like"/>
    <property type="match status" value="1"/>
</dbReference>
<dbReference type="Gene3D" id="3.40.50.1580">
    <property type="entry name" value="Nucleoside phosphorylase domain"/>
    <property type="match status" value="1"/>
</dbReference>
<dbReference type="HAMAP" id="MF_01627">
    <property type="entry name" value="Pur_nucleosid_phosp"/>
    <property type="match status" value="1"/>
</dbReference>
<dbReference type="InterPro" id="IPR004402">
    <property type="entry name" value="DeoD-type"/>
</dbReference>
<dbReference type="InterPro" id="IPR018016">
    <property type="entry name" value="Nucleoside_phosphorylase_CS"/>
</dbReference>
<dbReference type="InterPro" id="IPR000845">
    <property type="entry name" value="Nucleoside_phosphorylase_d"/>
</dbReference>
<dbReference type="InterPro" id="IPR035994">
    <property type="entry name" value="Nucleoside_phosphorylase_sf"/>
</dbReference>
<dbReference type="NCBIfam" id="TIGR00107">
    <property type="entry name" value="deoD"/>
    <property type="match status" value="1"/>
</dbReference>
<dbReference type="NCBIfam" id="NF004489">
    <property type="entry name" value="PRK05819.1"/>
    <property type="match status" value="1"/>
</dbReference>
<dbReference type="NCBIfam" id="NF009914">
    <property type="entry name" value="PRK13374.1"/>
    <property type="match status" value="1"/>
</dbReference>
<dbReference type="PANTHER" id="PTHR43691:SF2">
    <property type="entry name" value="PURINE NUCLEOSIDE PHOSPHORYLASE DEOD-TYPE"/>
    <property type="match status" value="1"/>
</dbReference>
<dbReference type="PANTHER" id="PTHR43691">
    <property type="entry name" value="URIDINE PHOSPHORYLASE"/>
    <property type="match status" value="1"/>
</dbReference>
<dbReference type="Pfam" id="PF01048">
    <property type="entry name" value="PNP_UDP_1"/>
    <property type="match status" value="1"/>
</dbReference>
<dbReference type="SUPFAM" id="SSF53167">
    <property type="entry name" value="Purine and uridine phosphorylases"/>
    <property type="match status" value="1"/>
</dbReference>
<dbReference type="PROSITE" id="PS01232">
    <property type="entry name" value="PNP_UDP_1"/>
    <property type="match status" value="1"/>
</dbReference>
<comment type="function">
    <text evidence="2">Catalyzes the reversible phosphorolytic breakdown of the N-glycosidic bond in the beta-(deoxy)ribonucleoside molecules, with the formation of the corresponding free purine bases and pentose-1-phosphate.</text>
</comment>
<comment type="catalytic activity">
    <reaction evidence="2">
        <text>a purine D-ribonucleoside + phosphate = a purine nucleobase + alpha-D-ribose 1-phosphate</text>
        <dbReference type="Rhea" id="RHEA:19805"/>
        <dbReference type="ChEBI" id="CHEBI:26386"/>
        <dbReference type="ChEBI" id="CHEBI:43474"/>
        <dbReference type="ChEBI" id="CHEBI:57720"/>
        <dbReference type="ChEBI" id="CHEBI:142355"/>
        <dbReference type="EC" id="2.4.2.1"/>
    </reaction>
</comment>
<comment type="catalytic activity">
    <reaction evidence="2">
        <text>a purine 2'-deoxy-D-ribonucleoside + phosphate = a purine nucleobase + 2-deoxy-alpha-D-ribose 1-phosphate</text>
        <dbReference type="Rhea" id="RHEA:36431"/>
        <dbReference type="ChEBI" id="CHEBI:26386"/>
        <dbReference type="ChEBI" id="CHEBI:43474"/>
        <dbReference type="ChEBI" id="CHEBI:57259"/>
        <dbReference type="ChEBI" id="CHEBI:142361"/>
        <dbReference type="EC" id="2.4.2.1"/>
    </reaction>
</comment>
<comment type="subunit">
    <text evidence="2">Homohexamer; trimer of homodimers.</text>
</comment>
<comment type="similarity">
    <text evidence="2">Belongs to the PNP/UDP phosphorylase family.</text>
</comment>
<gene>
    <name evidence="2" type="primary">deoD</name>
    <name type="ordered locus">Shewmr4_1040</name>
</gene>